<protein>
    <recommendedName>
        <fullName evidence="1">Cysteine--tRNA ligase</fullName>
        <ecNumber evidence="1">6.1.1.16</ecNumber>
    </recommendedName>
    <alternativeName>
        <fullName evidence="1">Cysteinyl-tRNA synthetase</fullName>
        <shortName evidence="1">CysRS</shortName>
    </alternativeName>
</protein>
<feature type="chain" id="PRO_0000159518" description="Cysteine--tRNA ligase">
    <location>
        <begin position="1"/>
        <end position="461"/>
    </location>
</feature>
<feature type="short sequence motif" description="'HIGH' region">
    <location>
        <begin position="30"/>
        <end position="40"/>
    </location>
</feature>
<feature type="short sequence motif" description="'KMSKS' region">
    <location>
        <begin position="268"/>
        <end position="272"/>
    </location>
</feature>
<feature type="binding site" evidence="1">
    <location>
        <position position="28"/>
    </location>
    <ligand>
        <name>Zn(2+)</name>
        <dbReference type="ChEBI" id="CHEBI:29105"/>
    </ligand>
</feature>
<feature type="binding site" evidence="1">
    <location>
        <position position="211"/>
    </location>
    <ligand>
        <name>Zn(2+)</name>
        <dbReference type="ChEBI" id="CHEBI:29105"/>
    </ligand>
</feature>
<feature type="binding site" evidence="1">
    <location>
        <position position="236"/>
    </location>
    <ligand>
        <name>Zn(2+)</name>
        <dbReference type="ChEBI" id="CHEBI:29105"/>
    </ligand>
</feature>
<feature type="binding site" evidence="1">
    <location>
        <position position="240"/>
    </location>
    <ligand>
        <name>Zn(2+)</name>
        <dbReference type="ChEBI" id="CHEBI:29105"/>
    </ligand>
</feature>
<feature type="binding site" evidence="1">
    <location>
        <position position="271"/>
    </location>
    <ligand>
        <name>ATP</name>
        <dbReference type="ChEBI" id="CHEBI:30616"/>
    </ligand>
</feature>
<accession>Q5E4F1</accession>
<reference key="1">
    <citation type="journal article" date="2005" name="Proc. Natl. Acad. Sci. U.S.A.">
        <title>Complete genome sequence of Vibrio fischeri: a symbiotic bacterium with pathogenic congeners.</title>
        <authorList>
            <person name="Ruby E.G."/>
            <person name="Urbanowski M."/>
            <person name="Campbell J."/>
            <person name="Dunn A."/>
            <person name="Faini M."/>
            <person name="Gunsalus R."/>
            <person name="Lostroh P."/>
            <person name="Lupp C."/>
            <person name="McCann J."/>
            <person name="Millikan D."/>
            <person name="Schaefer A."/>
            <person name="Stabb E."/>
            <person name="Stevens A."/>
            <person name="Visick K."/>
            <person name="Whistler C."/>
            <person name="Greenberg E.P."/>
        </authorList>
    </citation>
    <scope>NUCLEOTIDE SEQUENCE [LARGE SCALE GENOMIC DNA]</scope>
    <source>
        <strain>ATCC 700601 / ES114</strain>
    </source>
</reference>
<sequence length="461" mass="51932">MLKIYNSLTRQKEEFKPITEGKVGMYVCGVTIYDLCHIGHGRTFVSFDVISRYLRFLGYDLTFVRNITDIDDKIIKRAAENGETCDALTERLIADMHADFDALNMKRPDVEPRATEYIKEIIALVERLIERGFAYVASNGDVMFEVKKYDEYGCLSRQDLEQLQAGSRVTLEEASVKRSGMDFVLWKMSKPGEPTWESPWGPGRPGWHIECSAMNSSILGDHFDIHGGGSDLMFPHHENEIAQSCCAHDTPYVNTWMHSGMVMVDREKMSKSLGNFFTIRDVLAHYDSETVRYFLMSGHYRSQLNYSEENLNQARASLERLYTSLRGLDLSVTPAGGEEFVGRFSTAMNDDFNTPEAYSVLFEMAREVNRLKTENIDTASKLGALMRELADVLGLLSQEPEAFLQGGSSNDDVAEIEALIKARNDARAAKDWAAADAARDAIAALNIVLEDGPEGTTWRRK</sequence>
<dbReference type="EC" id="6.1.1.16" evidence="1"/>
<dbReference type="EMBL" id="CP000020">
    <property type="protein sequence ID" value="AAW86095.1"/>
    <property type="molecule type" value="Genomic_DNA"/>
</dbReference>
<dbReference type="RefSeq" id="WP_011262168.1">
    <property type="nucleotide sequence ID" value="NC_006840.2"/>
</dbReference>
<dbReference type="RefSeq" id="YP_204983.1">
    <property type="nucleotide sequence ID" value="NC_006840.2"/>
</dbReference>
<dbReference type="SMR" id="Q5E4F1"/>
<dbReference type="STRING" id="312309.VF_1600"/>
<dbReference type="EnsemblBacteria" id="AAW86095">
    <property type="protein sequence ID" value="AAW86095"/>
    <property type="gene ID" value="VF_1600"/>
</dbReference>
<dbReference type="GeneID" id="54164286"/>
<dbReference type="KEGG" id="vfi:VF_1600"/>
<dbReference type="PATRIC" id="fig|312309.11.peg.1621"/>
<dbReference type="eggNOG" id="COG0215">
    <property type="taxonomic scope" value="Bacteria"/>
</dbReference>
<dbReference type="HOGENOM" id="CLU_013528_0_1_6"/>
<dbReference type="OrthoDB" id="9815130at2"/>
<dbReference type="Proteomes" id="UP000000537">
    <property type="component" value="Chromosome I"/>
</dbReference>
<dbReference type="GO" id="GO:0005829">
    <property type="term" value="C:cytosol"/>
    <property type="evidence" value="ECO:0007669"/>
    <property type="project" value="TreeGrafter"/>
</dbReference>
<dbReference type="GO" id="GO:0005524">
    <property type="term" value="F:ATP binding"/>
    <property type="evidence" value="ECO:0007669"/>
    <property type="project" value="UniProtKB-UniRule"/>
</dbReference>
<dbReference type="GO" id="GO:0004817">
    <property type="term" value="F:cysteine-tRNA ligase activity"/>
    <property type="evidence" value="ECO:0007669"/>
    <property type="project" value="UniProtKB-UniRule"/>
</dbReference>
<dbReference type="GO" id="GO:0008270">
    <property type="term" value="F:zinc ion binding"/>
    <property type="evidence" value="ECO:0007669"/>
    <property type="project" value="UniProtKB-UniRule"/>
</dbReference>
<dbReference type="GO" id="GO:0006423">
    <property type="term" value="P:cysteinyl-tRNA aminoacylation"/>
    <property type="evidence" value="ECO:0007669"/>
    <property type="project" value="UniProtKB-UniRule"/>
</dbReference>
<dbReference type="CDD" id="cd07963">
    <property type="entry name" value="Anticodon_Ia_Cys"/>
    <property type="match status" value="1"/>
</dbReference>
<dbReference type="CDD" id="cd00672">
    <property type="entry name" value="CysRS_core"/>
    <property type="match status" value="1"/>
</dbReference>
<dbReference type="FunFam" id="1.20.120.1910:FF:000001">
    <property type="entry name" value="Cysteine--tRNA ligase"/>
    <property type="match status" value="1"/>
</dbReference>
<dbReference type="FunFam" id="3.40.50.620:FF:000009">
    <property type="entry name" value="Cysteine--tRNA ligase"/>
    <property type="match status" value="1"/>
</dbReference>
<dbReference type="Gene3D" id="1.20.120.1910">
    <property type="entry name" value="Cysteine-tRNA ligase, C-terminal anti-codon recognition domain"/>
    <property type="match status" value="1"/>
</dbReference>
<dbReference type="Gene3D" id="3.40.50.620">
    <property type="entry name" value="HUPs"/>
    <property type="match status" value="1"/>
</dbReference>
<dbReference type="HAMAP" id="MF_00041">
    <property type="entry name" value="Cys_tRNA_synth"/>
    <property type="match status" value="1"/>
</dbReference>
<dbReference type="InterPro" id="IPR015803">
    <property type="entry name" value="Cys-tRNA-ligase"/>
</dbReference>
<dbReference type="InterPro" id="IPR015273">
    <property type="entry name" value="Cys-tRNA-synt_Ia_DALR"/>
</dbReference>
<dbReference type="InterPro" id="IPR024909">
    <property type="entry name" value="Cys-tRNA/MSH_ligase"/>
</dbReference>
<dbReference type="InterPro" id="IPR056411">
    <property type="entry name" value="CysS_C"/>
</dbReference>
<dbReference type="InterPro" id="IPR014729">
    <property type="entry name" value="Rossmann-like_a/b/a_fold"/>
</dbReference>
<dbReference type="InterPro" id="IPR032678">
    <property type="entry name" value="tRNA-synt_1_cat_dom"/>
</dbReference>
<dbReference type="InterPro" id="IPR009080">
    <property type="entry name" value="tRNAsynth_Ia_anticodon-bd"/>
</dbReference>
<dbReference type="NCBIfam" id="TIGR00435">
    <property type="entry name" value="cysS"/>
    <property type="match status" value="1"/>
</dbReference>
<dbReference type="PANTHER" id="PTHR10890:SF3">
    <property type="entry name" value="CYSTEINE--TRNA LIGASE, CYTOPLASMIC"/>
    <property type="match status" value="1"/>
</dbReference>
<dbReference type="PANTHER" id="PTHR10890">
    <property type="entry name" value="CYSTEINYL-TRNA SYNTHETASE"/>
    <property type="match status" value="1"/>
</dbReference>
<dbReference type="Pfam" id="PF23493">
    <property type="entry name" value="CysS_C"/>
    <property type="match status" value="1"/>
</dbReference>
<dbReference type="Pfam" id="PF09190">
    <property type="entry name" value="DALR_2"/>
    <property type="match status" value="1"/>
</dbReference>
<dbReference type="Pfam" id="PF01406">
    <property type="entry name" value="tRNA-synt_1e"/>
    <property type="match status" value="1"/>
</dbReference>
<dbReference type="PRINTS" id="PR00983">
    <property type="entry name" value="TRNASYNTHCYS"/>
</dbReference>
<dbReference type="SMART" id="SM00840">
    <property type="entry name" value="DALR_2"/>
    <property type="match status" value="1"/>
</dbReference>
<dbReference type="SUPFAM" id="SSF47323">
    <property type="entry name" value="Anticodon-binding domain of a subclass of class I aminoacyl-tRNA synthetases"/>
    <property type="match status" value="1"/>
</dbReference>
<dbReference type="SUPFAM" id="SSF52374">
    <property type="entry name" value="Nucleotidylyl transferase"/>
    <property type="match status" value="1"/>
</dbReference>
<organism>
    <name type="scientific">Aliivibrio fischeri (strain ATCC 700601 / ES114)</name>
    <name type="common">Vibrio fischeri</name>
    <dbReference type="NCBI Taxonomy" id="312309"/>
    <lineage>
        <taxon>Bacteria</taxon>
        <taxon>Pseudomonadati</taxon>
        <taxon>Pseudomonadota</taxon>
        <taxon>Gammaproteobacteria</taxon>
        <taxon>Vibrionales</taxon>
        <taxon>Vibrionaceae</taxon>
        <taxon>Aliivibrio</taxon>
    </lineage>
</organism>
<proteinExistence type="inferred from homology"/>
<evidence type="ECO:0000255" key="1">
    <source>
        <dbReference type="HAMAP-Rule" id="MF_00041"/>
    </source>
</evidence>
<gene>
    <name evidence="1" type="primary">cysS</name>
    <name type="ordered locus">VF_1600</name>
</gene>
<keyword id="KW-0030">Aminoacyl-tRNA synthetase</keyword>
<keyword id="KW-0067">ATP-binding</keyword>
<keyword id="KW-0963">Cytoplasm</keyword>
<keyword id="KW-0436">Ligase</keyword>
<keyword id="KW-0479">Metal-binding</keyword>
<keyword id="KW-0547">Nucleotide-binding</keyword>
<keyword id="KW-0648">Protein biosynthesis</keyword>
<keyword id="KW-1185">Reference proteome</keyword>
<keyword id="KW-0862">Zinc</keyword>
<comment type="catalytic activity">
    <reaction evidence="1">
        <text>tRNA(Cys) + L-cysteine + ATP = L-cysteinyl-tRNA(Cys) + AMP + diphosphate</text>
        <dbReference type="Rhea" id="RHEA:17773"/>
        <dbReference type="Rhea" id="RHEA-COMP:9661"/>
        <dbReference type="Rhea" id="RHEA-COMP:9679"/>
        <dbReference type="ChEBI" id="CHEBI:30616"/>
        <dbReference type="ChEBI" id="CHEBI:33019"/>
        <dbReference type="ChEBI" id="CHEBI:35235"/>
        <dbReference type="ChEBI" id="CHEBI:78442"/>
        <dbReference type="ChEBI" id="CHEBI:78517"/>
        <dbReference type="ChEBI" id="CHEBI:456215"/>
        <dbReference type="EC" id="6.1.1.16"/>
    </reaction>
</comment>
<comment type="cofactor">
    <cofactor evidence="1">
        <name>Zn(2+)</name>
        <dbReference type="ChEBI" id="CHEBI:29105"/>
    </cofactor>
    <text evidence="1">Binds 1 zinc ion per subunit.</text>
</comment>
<comment type="subunit">
    <text evidence="1">Monomer.</text>
</comment>
<comment type="subcellular location">
    <subcellularLocation>
        <location evidence="1">Cytoplasm</location>
    </subcellularLocation>
</comment>
<comment type="similarity">
    <text evidence="1">Belongs to the class-I aminoacyl-tRNA synthetase family.</text>
</comment>
<name>SYC_ALIF1</name>